<accession>C3LSZ4</accession>
<evidence type="ECO:0000255" key="1">
    <source>
        <dbReference type="HAMAP-Rule" id="MF_00168"/>
    </source>
</evidence>
<reference key="1">
    <citation type="journal article" date="2008" name="PLoS ONE">
        <title>A recalibrated molecular clock and independent origins for the cholera pandemic clones.</title>
        <authorList>
            <person name="Feng L."/>
            <person name="Reeves P.R."/>
            <person name="Lan R."/>
            <person name="Ren Y."/>
            <person name="Gao C."/>
            <person name="Zhou Z."/>
            <person name="Ren Y."/>
            <person name="Cheng J."/>
            <person name="Wang W."/>
            <person name="Wang J."/>
            <person name="Qian W."/>
            <person name="Li D."/>
            <person name="Wang L."/>
        </authorList>
    </citation>
    <scope>NUCLEOTIDE SEQUENCE [LARGE SCALE GENOMIC DNA]</scope>
    <source>
        <strain>M66-2</strain>
    </source>
</reference>
<organism>
    <name type="scientific">Vibrio cholerae serotype O1 (strain M66-2)</name>
    <dbReference type="NCBI Taxonomy" id="579112"/>
    <lineage>
        <taxon>Bacteria</taxon>
        <taxon>Pseudomonadati</taxon>
        <taxon>Pseudomonadota</taxon>
        <taxon>Gammaproteobacteria</taxon>
        <taxon>Vibrionales</taxon>
        <taxon>Vibrionaceae</taxon>
        <taxon>Vibrio</taxon>
    </lineage>
</organism>
<dbReference type="EC" id="2.4.2.29" evidence="1"/>
<dbReference type="EMBL" id="CP001233">
    <property type="protein sequence ID" value="ACP05020.1"/>
    <property type="molecule type" value="Genomic_DNA"/>
</dbReference>
<dbReference type="RefSeq" id="WP_000768200.1">
    <property type="nucleotide sequence ID" value="NC_012578.1"/>
</dbReference>
<dbReference type="SMR" id="C3LSZ4"/>
<dbReference type="GeneID" id="89515114"/>
<dbReference type="KEGG" id="vcm:VCM66_0699"/>
<dbReference type="HOGENOM" id="CLU_022060_0_1_6"/>
<dbReference type="UniPathway" id="UPA00392"/>
<dbReference type="Proteomes" id="UP000001217">
    <property type="component" value="Chromosome I"/>
</dbReference>
<dbReference type="GO" id="GO:0005829">
    <property type="term" value="C:cytosol"/>
    <property type="evidence" value="ECO:0007669"/>
    <property type="project" value="TreeGrafter"/>
</dbReference>
<dbReference type="GO" id="GO:0046872">
    <property type="term" value="F:metal ion binding"/>
    <property type="evidence" value="ECO:0007669"/>
    <property type="project" value="UniProtKB-KW"/>
</dbReference>
<dbReference type="GO" id="GO:0008479">
    <property type="term" value="F:tRNA-guanosine(34) queuine transglycosylase activity"/>
    <property type="evidence" value="ECO:0007669"/>
    <property type="project" value="UniProtKB-UniRule"/>
</dbReference>
<dbReference type="GO" id="GO:0008616">
    <property type="term" value="P:queuosine biosynthetic process"/>
    <property type="evidence" value="ECO:0007669"/>
    <property type="project" value="UniProtKB-UniRule"/>
</dbReference>
<dbReference type="GO" id="GO:0002099">
    <property type="term" value="P:tRNA wobble guanine modification"/>
    <property type="evidence" value="ECO:0007669"/>
    <property type="project" value="TreeGrafter"/>
</dbReference>
<dbReference type="GO" id="GO:0101030">
    <property type="term" value="P:tRNA-guanine transglycosylation"/>
    <property type="evidence" value="ECO:0007669"/>
    <property type="project" value="InterPro"/>
</dbReference>
<dbReference type="FunFam" id="3.20.20.105:FF:000001">
    <property type="entry name" value="Queuine tRNA-ribosyltransferase"/>
    <property type="match status" value="1"/>
</dbReference>
<dbReference type="Gene3D" id="3.20.20.105">
    <property type="entry name" value="Queuine tRNA-ribosyltransferase-like"/>
    <property type="match status" value="1"/>
</dbReference>
<dbReference type="HAMAP" id="MF_00168">
    <property type="entry name" value="Q_tRNA_Tgt"/>
    <property type="match status" value="1"/>
</dbReference>
<dbReference type="InterPro" id="IPR050076">
    <property type="entry name" value="ArchSynthase1/Queuine_TRR"/>
</dbReference>
<dbReference type="InterPro" id="IPR004803">
    <property type="entry name" value="TGT"/>
</dbReference>
<dbReference type="InterPro" id="IPR036511">
    <property type="entry name" value="TGT-like_sf"/>
</dbReference>
<dbReference type="InterPro" id="IPR002616">
    <property type="entry name" value="tRNA_ribo_trans-like"/>
</dbReference>
<dbReference type="NCBIfam" id="TIGR00430">
    <property type="entry name" value="Q_tRNA_tgt"/>
    <property type="match status" value="1"/>
</dbReference>
<dbReference type="NCBIfam" id="TIGR00449">
    <property type="entry name" value="tgt_general"/>
    <property type="match status" value="1"/>
</dbReference>
<dbReference type="PANTHER" id="PTHR46499">
    <property type="entry name" value="QUEUINE TRNA-RIBOSYLTRANSFERASE"/>
    <property type="match status" value="1"/>
</dbReference>
<dbReference type="PANTHER" id="PTHR46499:SF1">
    <property type="entry name" value="QUEUINE TRNA-RIBOSYLTRANSFERASE"/>
    <property type="match status" value="1"/>
</dbReference>
<dbReference type="Pfam" id="PF01702">
    <property type="entry name" value="TGT"/>
    <property type="match status" value="1"/>
</dbReference>
<dbReference type="SUPFAM" id="SSF51713">
    <property type="entry name" value="tRNA-guanine transglycosylase"/>
    <property type="match status" value="1"/>
</dbReference>
<proteinExistence type="inferred from homology"/>
<sequence length="379" mass="43253">MKLKFELKKKNGNARRGQLIFERGTVQTPAFMPVGTYGTVKGMTPEEVKETGAQILLGNTFHLWLRPGQEVMKMHGDLHDFMNWQGPILTDSGGFQVFSLGDIRKITEEGVHFRNPVNGDKIFMDAEKSMEIQKDLGSDIVMIFDECTPYPATHDEAKKSMEMSLRWAKRSRDHFDKLENPNNLFGIVQGGVYEDLRDVSVKGLTEIGFDGYAVGGLAVGEPKEDMHRVLEHTCPQLPEDKPRYLMGVGKPEDLVEGVRRGIDMFDCVMPTRNARNGHLFVTGGVIKIRNAAHKTDTTPLDPHCDCYTCKNYSKSYLHHLDRCNEILGARLNTIHNLRYYQRLMESIRKAIDEDRFDQFVAEFYARRNREVPPLQKDKA</sequence>
<gene>
    <name evidence="1" type="primary">tgt</name>
    <name type="ordered locus">VCM66_0699</name>
</gene>
<name>TGT_VIBCM</name>
<keyword id="KW-0328">Glycosyltransferase</keyword>
<keyword id="KW-0479">Metal-binding</keyword>
<keyword id="KW-0671">Queuosine biosynthesis</keyword>
<keyword id="KW-0808">Transferase</keyword>
<keyword id="KW-0819">tRNA processing</keyword>
<keyword id="KW-0862">Zinc</keyword>
<comment type="function">
    <text evidence="1">Catalyzes the base-exchange of a guanine (G) residue with the queuine precursor 7-aminomethyl-7-deazaguanine (PreQ1) at position 34 (anticodon wobble position) in tRNAs with GU(N) anticodons (tRNA-Asp, -Asn, -His and -Tyr). Catalysis occurs through a double-displacement mechanism. The nucleophile active site attacks the C1' of nucleotide 34 to detach the guanine base from the RNA, forming a covalent enzyme-RNA intermediate. The proton acceptor active site deprotonates the incoming PreQ1, allowing a nucleophilic attack on the C1' of the ribose to form the product. After dissociation, two additional enzymatic reactions on the tRNA convert PreQ1 to queuine (Q), resulting in the hypermodified nucleoside queuosine (7-(((4,5-cis-dihydroxy-2-cyclopenten-1-yl)amino)methyl)-7-deazaguanosine).</text>
</comment>
<comment type="catalytic activity">
    <reaction evidence="1">
        <text>7-aminomethyl-7-carbaguanine + guanosine(34) in tRNA = 7-aminomethyl-7-carbaguanosine(34) in tRNA + guanine</text>
        <dbReference type="Rhea" id="RHEA:24104"/>
        <dbReference type="Rhea" id="RHEA-COMP:10341"/>
        <dbReference type="Rhea" id="RHEA-COMP:10342"/>
        <dbReference type="ChEBI" id="CHEBI:16235"/>
        <dbReference type="ChEBI" id="CHEBI:58703"/>
        <dbReference type="ChEBI" id="CHEBI:74269"/>
        <dbReference type="ChEBI" id="CHEBI:82833"/>
        <dbReference type="EC" id="2.4.2.29"/>
    </reaction>
</comment>
<comment type="cofactor">
    <cofactor evidence="1">
        <name>Zn(2+)</name>
        <dbReference type="ChEBI" id="CHEBI:29105"/>
    </cofactor>
    <text evidence="1">Binds 1 zinc ion per subunit.</text>
</comment>
<comment type="pathway">
    <text evidence="1">tRNA modification; tRNA-queuosine biosynthesis.</text>
</comment>
<comment type="subunit">
    <text evidence="1">Homodimer. Within each dimer, one monomer is responsible for RNA recognition and catalysis, while the other monomer binds to the replacement base PreQ1.</text>
</comment>
<comment type="similarity">
    <text evidence="1">Belongs to the queuine tRNA-ribosyltransferase family.</text>
</comment>
<protein>
    <recommendedName>
        <fullName evidence="1">Queuine tRNA-ribosyltransferase</fullName>
        <ecNumber evidence="1">2.4.2.29</ecNumber>
    </recommendedName>
    <alternativeName>
        <fullName evidence="1">Guanine insertion enzyme</fullName>
    </alternativeName>
    <alternativeName>
        <fullName evidence="1">tRNA-guanine transglycosylase</fullName>
    </alternativeName>
</protein>
<feature type="chain" id="PRO_1000198037" description="Queuine tRNA-ribosyltransferase">
    <location>
        <begin position="1"/>
        <end position="379"/>
    </location>
</feature>
<feature type="region of interest" description="RNA binding" evidence="1">
    <location>
        <begin position="247"/>
        <end position="253"/>
    </location>
</feature>
<feature type="region of interest" description="RNA binding; important for wobble base 34 recognition" evidence="1">
    <location>
        <begin position="271"/>
        <end position="275"/>
    </location>
</feature>
<feature type="active site" description="Proton acceptor" evidence="1">
    <location>
        <position position="91"/>
    </location>
</feature>
<feature type="active site" description="Nucleophile" evidence="1">
    <location>
        <position position="266"/>
    </location>
</feature>
<feature type="binding site" evidence="1">
    <location>
        <begin position="91"/>
        <end position="95"/>
    </location>
    <ligand>
        <name>substrate</name>
    </ligand>
</feature>
<feature type="binding site" evidence="1">
    <location>
        <position position="145"/>
    </location>
    <ligand>
        <name>substrate</name>
    </ligand>
</feature>
<feature type="binding site" evidence="1">
    <location>
        <position position="189"/>
    </location>
    <ligand>
        <name>substrate</name>
    </ligand>
</feature>
<feature type="binding site" evidence="1">
    <location>
        <position position="216"/>
    </location>
    <ligand>
        <name>substrate</name>
    </ligand>
</feature>
<feature type="binding site" evidence="1">
    <location>
        <position position="304"/>
    </location>
    <ligand>
        <name>Zn(2+)</name>
        <dbReference type="ChEBI" id="CHEBI:29105"/>
    </ligand>
</feature>
<feature type="binding site" evidence="1">
    <location>
        <position position="306"/>
    </location>
    <ligand>
        <name>Zn(2+)</name>
        <dbReference type="ChEBI" id="CHEBI:29105"/>
    </ligand>
</feature>
<feature type="binding site" evidence="1">
    <location>
        <position position="309"/>
    </location>
    <ligand>
        <name>Zn(2+)</name>
        <dbReference type="ChEBI" id="CHEBI:29105"/>
    </ligand>
</feature>
<feature type="binding site" evidence="1">
    <location>
        <position position="335"/>
    </location>
    <ligand>
        <name>Zn(2+)</name>
        <dbReference type="ChEBI" id="CHEBI:29105"/>
    </ligand>
</feature>